<name>TRMN6_PORG3</name>
<comment type="function">
    <text evidence="1">Specifically methylates the adenine in position 37 of tRNA(1)(Val) (anticodon cmo5UAC).</text>
</comment>
<comment type="catalytic activity">
    <reaction evidence="1">
        <text>adenosine(37) in tRNA1(Val) + S-adenosyl-L-methionine = N(6)-methyladenosine(37) in tRNA1(Val) + S-adenosyl-L-homocysteine + H(+)</text>
        <dbReference type="Rhea" id="RHEA:43160"/>
        <dbReference type="Rhea" id="RHEA-COMP:10369"/>
        <dbReference type="Rhea" id="RHEA-COMP:10370"/>
        <dbReference type="ChEBI" id="CHEBI:15378"/>
        <dbReference type="ChEBI" id="CHEBI:57856"/>
        <dbReference type="ChEBI" id="CHEBI:59789"/>
        <dbReference type="ChEBI" id="CHEBI:74411"/>
        <dbReference type="ChEBI" id="CHEBI:74449"/>
        <dbReference type="EC" id="2.1.1.223"/>
    </reaction>
</comment>
<comment type="subcellular location">
    <subcellularLocation>
        <location evidence="1">Cytoplasm</location>
    </subcellularLocation>
</comment>
<comment type="similarity">
    <text evidence="1">Belongs to the methyltransferase superfamily. tRNA (adenine-N(6)-)-methyltransferase family.</text>
</comment>
<comment type="sequence caution" evidence="2">
    <conflict type="erroneous initiation">
        <sequence resource="EMBL-CDS" id="BAG33720"/>
    </conflict>
</comment>
<feature type="chain" id="PRO_0000387399" description="tRNA1(Val) (adenine(37)-N6)-methyltransferase">
    <location>
        <begin position="1"/>
        <end position="255"/>
    </location>
</feature>
<accession>B2RK25</accession>
<sequence length="255" mass="28251">MPTDIFSFKRFDIDQTGCAMRVGTDGVLLGAWAGEDPAGSIPQHCLDIGTGTGLIALMLAQRFPQARVQGIEIDPIAAECARANAAASPFSDRIVIASGDILDSSLESLIGNQRFDLIVSNPPFFKSSLHAPDRQRTMARHEETLPLEKLICRASELLSPQGRLALITPRDRLKDLRLYAATYRLVSSRLTEVRTLPHKEPKRILSEWRPADTAIDRSPFTDTLIIHPATGYYSPEYVRLTEPFYTTSFRILAVG</sequence>
<keyword id="KW-0963">Cytoplasm</keyword>
<keyword id="KW-0489">Methyltransferase</keyword>
<keyword id="KW-0949">S-adenosyl-L-methionine</keyword>
<keyword id="KW-0808">Transferase</keyword>
<keyword id="KW-0819">tRNA processing</keyword>
<proteinExistence type="inferred from homology"/>
<dbReference type="EC" id="2.1.1.223" evidence="1"/>
<dbReference type="EMBL" id="AP009380">
    <property type="protein sequence ID" value="BAG33720.1"/>
    <property type="status" value="ALT_INIT"/>
    <property type="molecule type" value="Genomic_DNA"/>
</dbReference>
<dbReference type="RefSeq" id="WP_039417154.1">
    <property type="nucleotide sequence ID" value="NC_010729.1"/>
</dbReference>
<dbReference type="SMR" id="B2RK25"/>
<dbReference type="GeneID" id="29256408"/>
<dbReference type="KEGG" id="pgn:PGN_1201"/>
<dbReference type="eggNOG" id="COG4123">
    <property type="taxonomic scope" value="Bacteria"/>
</dbReference>
<dbReference type="HOGENOM" id="CLU_061983_0_0_10"/>
<dbReference type="OrthoDB" id="5383291at2"/>
<dbReference type="BioCyc" id="PGIN431947:G1G2V-1375-MONOMER"/>
<dbReference type="Proteomes" id="UP000008842">
    <property type="component" value="Chromosome"/>
</dbReference>
<dbReference type="GO" id="GO:0005737">
    <property type="term" value="C:cytoplasm"/>
    <property type="evidence" value="ECO:0007669"/>
    <property type="project" value="UniProtKB-SubCell"/>
</dbReference>
<dbReference type="GO" id="GO:0003676">
    <property type="term" value="F:nucleic acid binding"/>
    <property type="evidence" value="ECO:0007669"/>
    <property type="project" value="InterPro"/>
</dbReference>
<dbReference type="GO" id="GO:0016430">
    <property type="term" value="F:tRNA (adenine-N6)-methyltransferase activity"/>
    <property type="evidence" value="ECO:0007669"/>
    <property type="project" value="UniProtKB-UniRule"/>
</dbReference>
<dbReference type="GO" id="GO:0032259">
    <property type="term" value="P:methylation"/>
    <property type="evidence" value="ECO:0007669"/>
    <property type="project" value="UniProtKB-KW"/>
</dbReference>
<dbReference type="GO" id="GO:0008033">
    <property type="term" value="P:tRNA processing"/>
    <property type="evidence" value="ECO:0007669"/>
    <property type="project" value="UniProtKB-UniRule"/>
</dbReference>
<dbReference type="CDD" id="cd02440">
    <property type="entry name" value="AdoMet_MTases"/>
    <property type="match status" value="1"/>
</dbReference>
<dbReference type="Gene3D" id="3.40.50.150">
    <property type="entry name" value="Vaccinia Virus protein VP39"/>
    <property type="match status" value="1"/>
</dbReference>
<dbReference type="HAMAP" id="MF_01872">
    <property type="entry name" value="tRNA_methyltr_YfiC"/>
    <property type="match status" value="1"/>
</dbReference>
<dbReference type="InterPro" id="IPR002052">
    <property type="entry name" value="DNA_methylase_N6_adenine_CS"/>
</dbReference>
<dbReference type="InterPro" id="IPR029063">
    <property type="entry name" value="SAM-dependent_MTases_sf"/>
</dbReference>
<dbReference type="InterPro" id="IPR007848">
    <property type="entry name" value="Small_mtfrase_dom"/>
</dbReference>
<dbReference type="InterPro" id="IPR050210">
    <property type="entry name" value="tRNA_Adenine-N(6)_MTase"/>
</dbReference>
<dbReference type="InterPro" id="IPR022882">
    <property type="entry name" value="tRNA_adenine-N6_MeTrfase"/>
</dbReference>
<dbReference type="PANTHER" id="PTHR47739">
    <property type="entry name" value="TRNA1(VAL) (ADENINE(37)-N6)-METHYLTRANSFERASE"/>
    <property type="match status" value="1"/>
</dbReference>
<dbReference type="PANTHER" id="PTHR47739:SF1">
    <property type="entry name" value="TRNA1(VAL) (ADENINE(37)-N6)-METHYLTRANSFERASE"/>
    <property type="match status" value="1"/>
</dbReference>
<dbReference type="Pfam" id="PF05175">
    <property type="entry name" value="MTS"/>
    <property type="match status" value="1"/>
</dbReference>
<dbReference type="SUPFAM" id="SSF53335">
    <property type="entry name" value="S-adenosyl-L-methionine-dependent methyltransferases"/>
    <property type="match status" value="1"/>
</dbReference>
<dbReference type="PROSITE" id="PS00092">
    <property type="entry name" value="N6_MTASE"/>
    <property type="match status" value="1"/>
</dbReference>
<organism>
    <name type="scientific">Porphyromonas gingivalis (strain ATCC 33277 / DSM 20709 / CIP 103683 / JCM 12257 / NCTC 11834 / 2561)</name>
    <dbReference type="NCBI Taxonomy" id="431947"/>
    <lineage>
        <taxon>Bacteria</taxon>
        <taxon>Pseudomonadati</taxon>
        <taxon>Bacteroidota</taxon>
        <taxon>Bacteroidia</taxon>
        <taxon>Bacteroidales</taxon>
        <taxon>Porphyromonadaceae</taxon>
        <taxon>Porphyromonas</taxon>
    </lineage>
</organism>
<evidence type="ECO:0000255" key="1">
    <source>
        <dbReference type="HAMAP-Rule" id="MF_01872"/>
    </source>
</evidence>
<evidence type="ECO:0000305" key="2"/>
<gene>
    <name type="ordered locus">PGN_1201</name>
</gene>
<reference key="1">
    <citation type="journal article" date="2008" name="DNA Res.">
        <title>Determination of the genome sequence of Porphyromonas gingivalis strain ATCC 33277 and genomic comparison with strain W83 revealed extensive genome rearrangements in P. gingivalis.</title>
        <authorList>
            <person name="Naito M."/>
            <person name="Hirakawa H."/>
            <person name="Yamashita A."/>
            <person name="Ohara N."/>
            <person name="Shoji M."/>
            <person name="Yukitake H."/>
            <person name="Nakayama K."/>
            <person name="Toh H."/>
            <person name="Yoshimura F."/>
            <person name="Kuhara S."/>
            <person name="Hattori M."/>
            <person name="Hayashi T."/>
            <person name="Nakayama K."/>
        </authorList>
    </citation>
    <scope>NUCLEOTIDE SEQUENCE [LARGE SCALE GENOMIC DNA]</scope>
    <source>
        <strain>ATCC 33277 / DSM 20709 / CIP 103683 / JCM 12257 / NCTC 11834 / 2561</strain>
    </source>
</reference>
<protein>
    <recommendedName>
        <fullName evidence="1">tRNA1(Val) (adenine(37)-N6)-methyltransferase</fullName>
        <ecNumber evidence="1">2.1.1.223</ecNumber>
    </recommendedName>
    <alternativeName>
        <fullName evidence="1">tRNA m6A37 methyltransferase</fullName>
    </alternativeName>
</protein>